<comment type="function">
    <text evidence="1">Component of the 90S pre-ribosome involved in the maturation of rRNAs. Required for early cleavages of the pre-RNAs in the 40S ribosomal subunit maturation pathway (By similarity).</text>
</comment>
<comment type="subunit">
    <text evidence="1">Associates with 90S and pre-40S pre-ribosomal particles.</text>
</comment>
<comment type="subcellular location">
    <subcellularLocation>
        <location evidence="1">Nucleus</location>
        <location evidence="1">Nucleolus</location>
    </subcellularLocation>
</comment>
<comment type="similarity">
    <text evidence="4">Belongs to the RRP36 family.</text>
</comment>
<evidence type="ECO:0000250" key="1"/>
<evidence type="ECO:0000255" key="2"/>
<evidence type="ECO:0000256" key="3">
    <source>
        <dbReference type="SAM" id="MobiDB-lite"/>
    </source>
</evidence>
<evidence type="ECO:0000305" key="4"/>
<name>RRP36_PYRTR</name>
<protein>
    <recommendedName>
        <fullName>rRNA biogenesis protein RRP36</fullName>
    </recommendedName>
    <alternativeName>
        <fullName>Ribosomal RNA-processing protein 36</fullName>
    </alternativeName>
</protein>
<reference key="1">
    <citation type="journal article" date="2013" name="G3 (Bethesda)">
        <title>Comparative genomics of a plant-pathogenic fungus, Pyrenophora tritici-repentis, reveals transduplication and the impact of repeat elements on pathogenicity and population divergence.</title>
        <authorList>
            <person name="Manning V.A."/>
            <person name="Pandelova I."/>
            <person name="Dhillon B."/>
            <person name="Wilhelm L.J."/>
            <person name="Goodwin S.B."/>
            <person name="Berlin A.M."/>
            <person name="Figueroa M."/>
            <person name="Freitag M."/>
            <person name="Hane J.K."/>
            <person name="Henrissat B."/>
            <person name="Holman W.H."/>
            <person name="Kodira C.D."/>
            <person name="Martin J."/>
            <person name="Oliver R.P."/>
            <person name="Robbertse B."/>
            <person name="Schackwitz W."/>
            <person name="Schwartz D.C."/>
            <person name="Spatafora J.W."/>
            <person name="Turgeon B.G."/>
            <person name="Yandava C."/>
            <person name="Young S."/>
            <person name="Zhou S."/>
            <person name="Zeng Q."/>
            <person name="Grigoriev I.V."/>
            <person name="Ma L.-J."/>
            <person name="Ciuffetti L.M."/>
        </authorList>
    </citation>
    <scope>NUCLEOTIDE SEQUENCE [LARGE SCALE GENOMIC DNA]</scope>
    <source>
        <strain>Pt-1C-BFP</strain>
    </source>
</reference>
<sequence length="333" mass="38259">MVLANKLDRNLRAAEESSDGEDYYEVTDRSSSASVIEADEGGNVISSDDDMSDASDHDDDKIKAQMSKVSFGALAKAQDALSSKQSVDRKRKRGDDTSKSQEDKLEALRERLRQIKAEKLANGTQPSKKAKKSKTKTKTTQDDNVEEKEDSDSDAAPHARSSKHAPAVQSSKRMVSRKRNVVEVKKPVFRDPRFDNVSGPRPEDYVVEKRYSFLKDYRASEIAELRNTIKKTKNEGEKEQLKKKLLSMESQQKARENKERLQDVTREHKKKEKELVKEGKKPFFLKKSEQKKIALVDRFQNMKAKQRDKVIERRRKKVTAKERKNMPDERRTA</sequence>
<keyword id="KW-0175">Coiled coil</keyword>
<keyword id="KW-0539">Nucleus</keyword>
<keyword id="KW-1185">Reference proteome</keyword>
<keyword id="KW-0687">Ribonucleoprotein</keyword>
<keyword id="KW-0690">Ribosome biogenesis</keyword>
<keyword id="KW-0698">rRNA processing</keyword>
<proteinExistence type="inferred from homology"/>
<dbReference type="EMBL" id="DS231617">
    <property type="protein sequence ID" value="EDU46623.1"/>
    <property type="molecule type" value="Genomic_DNA"/>
</dbReference>
<dbReference type="RefSeq" id="XP_001934118.1">
    <property type="nucleotide sequence ID" value="XM_001934083.1"/>
</dbReference>
<dbReference type="SMR" id="B2W2Y7"/>
<dbReference type="FunCoup" id="B2W2Y7">
    <property type="interactions" value="541"/>
</dbReference>
<dbReference type="STRING" id="426418.B2W2Y7"/>
<dbReference type="EnsemblFungi" id="EDU46623">
    <property type="protein sequence ID" value="EDU46623"/>
    <property type="gene ID" value="PTRG_03785"/>
</dbReference>
<dbReference type="eggNOG" id="KOG3190">
    <property type="taxonomic scope" value="Eukaryota"/>
</dbReference>
<dbReference type="HOGENOM" id="CLU_048802_0_1_1"/>
<dbReference type="InParanoid" id="B2W2Y7"/>
<dbReference type="OMA" id="ERKEMPW"/>
<dbReference type="OrthoDB" id="35324at28556"/>
<dbReference type="Proteomes" id="UP000001471">
    <property type="component" value="Unassembled WGS sequence"/>
</dbReference>
<dbReference type="GO" id="GO:0030686">
    <property type="term" value="C:90S preribosome"/>
    <property type="evidence" value="ECO:0007669"/>
    <property type="project" value="TreeGrafter"/>
</dbReference>
<dbReference type="GO" id="GO:0005730">
    <property type="term" value="C:nucleolus"/>
    <property type="evidence" value="ECO:0007669"/>
    <property type="project" value="UniProtKB-SubCell"/>
</dbReference>
<dbReference type="GO" id="GO:0000462">
    <property type="term" value="P:maturation of SSU-rRNA from tricistronic rRNA transcript (SSU-rRNA, 5.8S rRNA, LSU-rRNA)"/>
    <property type="evidence" value="ECO:0007669"/>
    <property type="project" value="TreeGrafter"/>
</dbReference>
<dbReference type="InterPro" id="IPR009292">
    <property type="entry name" value="RRP36"/>
</dbReference>
<dbReference type="PANTHER" id="PTHR21738">
    <property type="entry name" value="RIBOSOMAL RNA PROCESSING PROTEIN 36 HOMOLOG"/>
    <property type="match status" value="1"/>
</dbReference>
<dbReference type="PANTHER" id="PTHR21738:SF0">
    <property type="entry name" value="RIBOSOMAL RNA PROCESSING PROTEIN 36 HOMOLOG"/>
    <property type="match status" value="1"/>
</dbReference>
<dbReference type="Pfam" id="PF06102">
    <property type="entry name" value="RRP36"/>
    <property type="match status" value="1"/>
</dbReference>
<accession>B2W2Y7</accession>
<gene>
    <name type="primary">RRP36</name>
    <name type="ORF">PTRG_03785</name>
</gene>
<organism>
    <name type="scientific">Pyrenophora tritici-repentis (strain Pt-1C-BFP)</name>
    <name type="common">Wheat tan spot fungus</name>
    <name type="synonym">Drechslera tritici-repentis</name>
    <dbReference type="NCBI Taxonomy" id="426418"/>
    <lineage>
        <taxon>Eukaryota</taxon>
        <taxon>Fungi</taxon>
        <taxon>Dikarya</taxon>
        <taxon>Ascomycota</taxon>
        <taxon>Pezizomycotina</taxon>
        <taxon>Dothideomycetes</taxon>
        <taxon>Pleosporomycetidae</taxon>
        <taxon>Pleosporales</taxon>
        <taxon>Pleosporineae</taxon>
        <taxon>Pleosporaceae</taxon>
        <taxon>Pyrenophora</taxon>
    </lineage>
</organism>
<feature type="chain" id="PRO_0000397654" description="rRNA biogenesis protein RRP36">
    <location>
        <begin position="1"/>
        <end position="333"/>
    </location>
</feature>
<feature type="region of interest" description="Disordered" evidence="3">
    <location>
        <begin position="1"/>
        <end position="179"/>
    </location>
</feature>
<feature type="region of interest" description="Disordered" evidence="3">
    <location>
        <begin position="249"/>
        <end position="275"/>
    </location>
</feature>
<feature type="region of interest" description="Disordered" evidence="3">
    <location>
        <begin position="304"/>
        <end position="333"/>
    </location>
</feature>
<feature type="coiled-coil region" evidence="2">
    <location>
        <begin position="92"/>
        <end position="122"/>
    </location>
</feature>
<feature type="coiled-coil region" evidence="2">
    <location>
        <begin position="219"/>
        <end position="281"/>
    </location>
</feature>
<feature type="compositionally biased region" description="Basic and acidic residues" evidence="3">
    <location>
        <begin position="1"/>
        <end position="15"/>
    </location>
</feature>
<feature type="compositionally biased region" description="Acidic residues" evidence="3">
    <location>
        <begin position="16"/>
        <end position="25"/>
    </location>
</feature>
<feature type="compositionally biased region" description="Basic and acidic residues" evidence="3">
    <location>
        <begin position="54"/>
        <end position="63"/>
    </location>
</feature>
<feature type="compositionally biased region" description="Basic and acidic residues" evidence="3">
    <location>
        <begin position="93"/>
        <end position="119"/>
    </location>
</feature>
<feature type="compositionally biased region" description="Basic residues" evidence="3">
    <location>
        <begin position="128"/>
        <end position="137"/>
    </location>
</feature>
<feature type="compositionally biased region" description="Acidic residues" evidence="3">
    <location>
        <begin position="143"/>
        <end position="153"/>
    </location>
</feature>
<feature type="compositionally biased region" description="Basic and acidic residues" evidence="3">
    <location>
        <begin position="252"/>
        <end position="275"/>
    </location>
</feature>
<feature type="compositionally biased region" description="Basic and acidic residues" evidence="3">
    <location>
        <begin position="319"/>
        <end position="333"/>
    </location>
</feature>